<name>TNA1_YEAST</name>
<proteinExistence type="evidence at protein level"/>
<accession>P53322</accession>
<accession>D6VV39</accession>
<feature type="chain" id="PRO_0000121369" description="High-affinity nicotinic acid transporter">
    <location>
        <begin position="1"/>
        <end position="534"/>
    </location>
</feature>
<feature type="topological domain" description="Extracellular" evidence="1">
    <location>
        <begin position="1"/>
        <end position="130"/>
    </location>
</feature>
<feature type="transmembrane region" description="Helical" evidence="1">
    <location>
        <begin position="131"/>
        <end position="151"/>
    </location>
</feature>
<feature type="topological domain" description="Cytoplasmic" evidence="1">
    <location>
        <position position="152"/>
    </location>
</feature>
<feature type="transmembrane region" description="Helical" evidence="1">
    <location>
        <begin position="153"/>
        <end position="173"/>
    </location>
</feature>
<feature type="topological domain" description="Extracellular" evidence="1">
    <location>
        <begin position="174"/>
        <end position="187"/>
    </location>
</feature>
<feature type="transmembrane region" description="Helical" evidence="1">
    <location>
        <begin position="188"/>
        <end position="208"/>
    </location>
</feature>
<feature type="topological domain" description="Cytoplasmic" evidence="1">
    <location>
        <begin position="209"/>
        <end position="217"/>
    </location>
</feature>
<feature type="transmembrane region" description="Helical" evidence="1">
    <location>
        <begin position="218"/>
        <end position="238"/>
    </location>
</feature>
<feature type="topological domain" description="Extracellular" evidence="1">
    <location>
        <begin position="239"/>
        <end position="250"/>
    </location>
</feature>
<feature type="transmembrane region" description="Helical" evidence="1">
    <location>
        <begin position="251"/>
        <end position="271"/>
    </location>
</feature>
<feature type="topological domain" description="Cytoplasmic" evidence="1">
    <location>
        <begin position="272"/>
        <end position="323"/>
    </location>
</feature>
<feature type="transmembrane region" description="Helical" evidence="1">
    <location>
        <begin position="324"/>
        <end position="344"/>
    </location>
</feature>
<feature type="topological domain" description="Extracellular" evidence="1">
    <location>
        <begin position="345"/>
        <end position="355"/>
    </location>
</feature>
<feature type="transmembrane region" description="Helical" evidence="1">
    <location>
        <begin position="356"/>
        <end position="376"/>
    </location>
</feature>
<feature type="topological domain" description="Cytoplasmic" evidence="1">
    <location>
        <begin position="377"/>
        <end position="384"/>
    </location>
</feature>
<feature type="transmembrane region" description="Helical" evidence="1">
    <location>
        <begin position="385"/>
        <end position="405"/>
    </location>
</feature>
<feature type="topological domain" description="Extracellular" evidence="1">
    <location>
        <begin position="406"/>
        <end position="410"/>
    </location>
</feature>
<feature type="transmembrane region" description="Helical" evidence="1">
    <location>
        <begin position="411"/>
        <end position="431"/>
    </location>
</feature>
<feature type="topological domain" description="Cytoplasmic" evidence="1">
    <location>
        <begin position="432"/>
        <end position="444"/>
    </location>
</feature>
<feature type="transmembrane region" description="Helical" evidence="1">
    <location>
        <begin position="445"/>
        <end position="465"/>
    </location>
</feature>
<feature type="topological domain" description="Extracellular" evidence="1">
    <location>
        <begin position="466"/>
        <end position="474"/>
    </location>
</feature>
<feature type="transmembrane region" description="Helical" evidence="1">
    <location>
        <begin position="475"/>
        <end position="495"/>
    </location>
</feature>
<feature type="topological domain" description="Cytoplasmic" evidence="1">
    <location>
        <begin position="496"/>
        <end position="534"/>
    </location>
</feature>
<feature type="region of interest" description="Disordered" evidence="2">
    <location>
        <begin position="21"/>
        <end position="56"/>
    </location>
</feature>
<feature type="modified residue" description="Phosphoserine" evidence="5">
    <location>
        <position position="27"/>
    </location>
</feature>
<feature type="cross-link" description="Glycyl lysine isopeptide (Lys-Gly) (interchain with G-Cter in ubiquitin)" evidence="3">
    <location>
        <position position="283"/>
    </location>
</feature>
<dbReference type="EMBL" id="Y07777">
    <property type="protein sequence ID" value="CAA69082.1"/>
    <property type="molecule type" value="Genomic_DNA"/>
</dbReference>
<dbReference type="EMBL" id="Z73044">
    <property type="protein sequence ID" value="CAA97289.1"/>
    <property type="molecule type" value="Genomic_DNA"/>
</dbReference>
<dbReference type="EMBL" id="BK006941">
    <property type="protein sequence ID" value="DAA08350.1"/>
    <property type="molecule type" value="Genomic_DNA"/>
</dbReference>
<dbReference type="PIR" id="S64593">
    <property type="entry name" value="S64593"/>
</dbReference>
<dbReference type="RefSeq" id="NP_011776.1">
    <property type="nucleotide sequence ID" value="NM_001181389.1"/>
</dbReference>
<dbReference type="SMR" id="P53322"/>
<dbReference type="BioGRID" id="33511">
    <property type="interactions" value="313"/>
</dbReference>
<dbReference type="DIP" id="DIP-8004N"/>
<dbReference type="FunCoup" id="P53322">
    <property type="interactions" value="259"/>
</dbReference>
<dbReference type="IntAct" id="P53322">
    <property type="interactions" value="12"/>
</dbReference>
<dbReference type="STRING" id="4932.YGR260W"/>
<dbReference type="TCDB" id="2.A.1.14.11">
    <property type="family name" value="the major facilitator superfamily (mfs)"/>
</dbReference>
<dbReference type="iPTMnet" id="P53322"/>
<dbReference type="PaxDb" id="4932-YGR260W"/>
<dbReference type="PeptideAtlas" id="P53322"/>
<dbReference type="EnsemblFungi" id="YGR260W_mRNA">
    <property type="protein sequence ID" value="YGR260W"/>
    <property type="gene ID" value="YGR260W"/>
</dbReference>
<dbReference type="GeneID" id="853175"/>
<dbReference type="KEGG" id="sce:YGR260W"/>
<dbReference type="AGR" id="SGD:S000003492"/>
<dbReference type="SGD" id="S000003492">
    <property type="gene designation" value="TNA1"/>
</dbReference>
<dbReference type="VEuPathDB" id="FungiDB:YGR260W"/>
<dbReference type="eggNOG" id="KOG2533">
    <property type="taxonomic scope" value="Eukaryota"/>
</dbReference>
<dbReference type="HOGENOM" id="CLU_001265_0_1_1"/>
<dbReference type="InParanoid" id="P53322"/>
<dbReference type="OMA" id="CTAWVKN"/>
<dbReference type="OrthoDB" id="2985014at2759"/>
<dbReference type="BioCyc" id="YEAST:G3O-30929-MONOMER"/>
<dbReference type="BioGRID-ORCS" id="853175">
    <property type="hits" value="10 hits in 10 CRISPR screens"/>
</dbReference>
<dbReference type="PRO" id="PR:P53322"/>
<dbReference type="Proteomes" id="UP000002311">
    <property type="component" value="Chromosome VII"/>
</dbReference>
<dbReference type="RNAct" id="P53322">
    <property type="molecule type" value="protein"/>
</dbReference>
<dbReference type="GO" id="GO:0071944">
    <property type="term" value="C:cell periphery"/>
    <property type="evidence" value="ECO:0007005"/>
    <property type="project" value="SGD"/>
</dbReference>
<dbReference type="GO" id="GO:0032541">
    <property type="term" value="C:cortical endoplasmic reticulum"/>
    <property type="evidence" value="ECO:0000314"/>
    <property type="project" value="SGD"/>
</dbReference>
<dbReference type="GO" id="GO:0005783">
    <property type="term" value="C:endoplasmic reticulum"/>
    <property type="evidence" value="ECO:0000314"/>
    <property type="project" value="SGD"/>
</dbReference>
<dbReference type="GO" id="GO:0000324">
    <property type="term" value="C:fungal-type vacuole"/>
    <property type="evidence" value="ECO:0007005"/>
    <property type="project" value="SGD"/>
</dbReference>
<dbReference type="GO" id="GO:0016020">
    <property type="term" value="C:membrane"/>
    <property type="evidence" value="ECO:0000318"/>
    <property type="project" value="GO_Central"/>
</dbReference>
<dbReference type="GO" id="GO:0005739">
    <property type="term" value="C:mitochondrion"/>
    <property type="evidence" value="ECO:0007005"/>
    <property type="project" value="SGD"/>
</dbReference>
<dbReference type="GO" id="GO:0005886">
    <property type="term" value="C:plasma membrane"/>
    <property type="evidence" value="ECO:0000314"/>
    <property type="project" value="SGD"/>
</dbReference>
<dbReference type="GO" id="GO:0046943">
    <property type="term" value="F:carboxylic acid transmembrane transporter activity"/>
    <property type="evidence" value="ECO:0000315"/>
    <property type="project" value="SGD"/>
</dbReference>
<dbReference type="GO" id="GO:0022857">
    <property type="term" value="F:transmembrane transporter activity"/>
    <property type="evidence" value="ECO:0000318"/>
    <property type="project" value="GO_Central"/>
</dbReference>
<dbReference type="GO" id="GO:0046942">
    <property type="term" value="P:carboxylic acid transport"/>
    <property type="evidence" value="ECO:0000315"/>
    <property type="project" value="SGD"/>
</dbReference>
<dbReference type="GO" id="GO:1903222">
    <property type="term" value="P:quinolinic acid transmembrane transport"/>
    <property type="evidence" value="ECO:0000315"/>
    <property type="project" value="SGD"/>
</dbReference>
<dbReference type="CDD" id="cd17327">
    <property type="entry name" value="MFS_FEN2_like"/>
    <property type="match status" value="1"/>
</dbReference>
<dbReference type="FunFam" id="1.20.1250.20:FF:000013">
    <property type="entry name" value="MFS general substrate transporter"/>
    <property type="match status" value="1"/>
</dbReference>
<dbReference type="FunFam" id="1.20.1250.20:FF:000370">
    <property type="entry name" value="Nicotinic acid permease"/>
    <property type="match status" value="1"/>
</dbReference>
<dbReference type="Gene3D" id="1.20.1250.20">
    <property type="entry name" value="MFS general substrate transporter like domains"/>
    <property type="match status" value="2"/>
</dbReference>
<dbReference type="InterPro" id="IPR011701">
    <property type="entry name" value="MFS"/>
</dbReference>
<dbReference type="InterPro" id="IPR036259">
    <property type="entry name" value="MFS_trans_sf"/>
</dbReference>
<dbReference type="PANTHER" id="PTHR43791:SF101">
    <property type="entry name" value="HIGH-AFFINITY NICOTINIC ACID TRANSPORTER"/>
    <property type="match status" value="1"/>
</dbReference>
<dbReference type="PANTHER" id="PTHR43791">
    <property type="entry name" value="PERMEASE-RELATED"/>
    <property type="match status" value="1"/>
</dbReference>
<dbReference type="Pfam" id="PF07690">
    <property type="entry name" value="MFS_1"/>
    <property type="match status" value="1"/>
</dbReference>
<dbReference type="SUPFAM" id="SSF103473">
    <property type="entry name" value="MFS general substrate transporter"/>
    <property type="match status" value="1"/>
</dbReference>
<sequence>MSNKFTMESPKHLVDDVLFISPTNDGSEEKPTEVTFQEDEGHDASLHNRSHDKKSELATEREIMATTTDDDGIPSPSHPMEKRVLRKMDIYLIPLMGMLYFLSNLDKSNIGNAEVAGLSKDIHLVGTQYNTCVTVFFATYVLFDPIGTNLLKIMGPPLMMSICLTCFGAISLGTAWVKNYAQLIVVRLLLGAFEGMIYPAINMYLSVCYRREQYALRFAFVFSAACLSSSFGGLIAYGCSKISGSLKDWQYIYIVEGCISLGFVPFYAFGLSKNLEDSWFFNKEEKEYISERYKTMNTFDPDEKFEWFQVWQAVKDVKTWASAVALFGIDLTTFGLTVFLPIIITSMGFTNVRAQLMTVPIYFLTAIVFFICAVWSDRIKLRSPFILGACLTTSIGIAIVLGSQVHGVRYFGVYILCMGIYVNAACNCLWLSGNTGNYFKRATALGINLFFGSGSGLVSGQIFVAKDKPRYIKGLSISLAFQVFSIFMTVVQIFLYKRENDKKKAIIDRCNELGEPIPYDERLSDKNPEFKYMY</sequence>
<gene>
    <name type="primary">TNA1</name>
    <name type="ordered locus">YGR260W</name>
</gene>
<protein>
    <recommendedName>
        <fullName>High-affinity nicotinic acid transporter</fullName>
    </recommendedName>
    <alternativeName>
        <fullName>Nicotinic acid permease</fullName>
    </alternativeName>
</protein>
<evidence type="ECO:0000255" key="1"/>
<evidence type="ECO:0000256" key="2">
    <source>
        <dbReference type="SAM" id="MobiDB-lite"/>
    </source>
</evidence>
<evidence type="ECO:0000269" key="3">
    <source>
    </source>
</evidence>
<evidence type="ECO:0000305" key="4"/>
<evidence type="ECO:0007744" key="5">
    <source>
    </source>
</evidence>
<reference key="1">
    <citation type="journal article" date="1997" name="Yeast">
        <title>Analysis of an 11.6 kb region from the right arm of chromosome VII of Saccharomyces cerevisiae between the RAD2 and the MES1 genes reveals the presence of three new genes.</title>
        <authorList>
            <person name="Clemente M.L."/>
            <person name="Sartori G."/>
            <person name="Cardazzo B."/>
            <person name="Carignani G."/>
        </authorList>
    </citation>
    <scope>NUCLEOTIDE SEQUENCE [GENOMIC DNA]</scope>
    <source>
        <strain>ATCC 96604 / S288c / FY1679</strain>
    </source>
</reference>
<reference key="2">
    <citation type="journal article" date="1997" name="Nature">
        <title>The nucleotide sequence of Saccharomyces cerevisiae chromosome VII.</title>
        <authorList>
            <person name="Tettelin H."/>
            <person name="Agostoni-Carbone M.L."/>
            <person name="Albermann K."/>
            <person name="Albers M."/>
            <person name="Arroyo J."/>
            <person name="Backes U."/>
            <person name="Barreiros T."/>
            <person name="Bertani I."/>
            <person name="Bjourson A.J."/>
            <person name="Brueckner M."/>
            <person name="Bruschi C.V."/>
            <person name="Carignani G."/>
            <person name="Castagnoli L."/>
            <person name="Cerdan E."/>
            <person name="Clemente M.L."/>
            <person name="Coblenz A."/>
            <person name="Coglievina M."/>
            <person name="Coissac E."/>
            <person name="Defoor E."/>
            <person name="Del Bino S."/>
            <person name="Delius H."/>
            <person name="Delneri D."/>
            <person name="de Wergifosse P."/>
            <person name="Dujon B."/>
            <person name="Durand P."/>
            <person name="Entian K.-D."/>
            <person name="Eraso P."/>
            <person name="Escribano V."/>
            <person name="Fabiani L."/>
            <person name="Fartmann B."/>
            <person name="Feroli F."/>
            <person name="Feuermann M."/>
            <person name="Frontali L."/>
            <person name="Garcia-Gonzalez M."/>
            <person name="Garcia-Saez M.I."/>
            <person name="Goffeau A."/>
            <person name="Guerreiro P."/>
            <person name="Hani J."/>
            <person name="Hansen M."/>
            <person name="Hebling U."/>
            <person name="Hernandez K."/>
            <person name="Heumann K."/>
            <person name="Hilger F."/>
            <person name="Hofmann B."/>
            <person name="Indge K.J."/>
            <person name="James C.M."/>
            <person name="Klima R."/>
            <person name="Koetter P."/>
            <person name="Kramer B."/>
            <person name="Kramer W."/>
            <person name="Lauquin G."/>
            <person name="Leuther H."/>
            <person name="Louis E.J."/>
            <person name="Maillier E."/>
            <person name="Marconi A."/>
            <person name="Martegani E."/>
            <person name="Mazon M.J."/>
            <person name="Mazzoni C."/>
            <person name="McReynolds A.D.K."/>
            <person name="Melchioretto P."/>
            <person name="Mewes H.-W."/>
            <person name="Minenkova O."/>
            <person name="Mueller-Auer S."/>
            <person name="Nawrocki A."/>
            <person name="Netter P."/>
            <person name="Neu R."/>
            <person name="Nombela C."/>
            <person name="Oliver S.G."/>
            <person name="Panzeri L."/>
            <person name="Paoluzi S."/>
            <person name="Plevani P."/>
            <person name="Portetelle D."/>
            <person name="Portillo F."/>
            <person name="Potier S."/>
            <person name="Purnelle B."/>
            <person name="Rieger M."/>
            <person name="Riles L."/>
            <person name="Rinaldi T."/>
            <person name="Robben J."/>
            <person name="Rodrigues-Pousada C."/>
            <person name="Rodriguez-Belmonte E."/>
            <person name="Rodriguez-Torres A.M."/>
            <person name="Rose M."/>
            <person name="Ruzzi M."/>
            <person name="Saliola M."/>
            <person name="Sanchez-Perez M."/>
            <person name="Schaefer B."/>
            <person name="Schaefer M."/>
            <person name="Scharfe M."/>
            <person name="Schmidheini T."/>
            <person name="Schreer A."/>
            <person name="Skala J."/>
            <person name="Souciet J.-L."/>
            <person name="Steensma H.Y."/>
            <person name="Talla E."/>
            <person name="Thierry A."/>
            <person name="Vandenbol M."/>
            <person name="van der Aart Q.J.M."/>
            <person name="Van Dyck L."/>
            <person name="Vanoni M."/>
            <person name="Verhasselt P."/>
            <person name="Voet M."/>
            <person name="Volckaert G."/>
            <person name="Wambutt R."/>
            <person name="Watson M.D."/>
            <person name="Weber N."/>
            <person name="Wedler E."/>
            <person name="Wedler H."/>
            <person name="Wipfli P."/>
            <person name="Wolf K."/>
            <person name="Wright L.F."/>
            <person name="Zaccaria P."/>
            <person name="Zimmermann M."/>
            <person name="Zollner A."/>
            <person name="Kleine K."/>
        </authorList>
    </citation>
    <scope>NUCLEOTIDE SEQUENCE [LARGE SCALE GENOMIC DNA]</scope>
    <source>
        <strain>ATCC 204508 / S288c</strain>
    </source>
</reference>
<reference key="3">
    <citation type="journal article" date="2014" name="G3 (Bethesda)">
        <title>The reference genome sequence of Saccharomyces cerevisiae: Then and now.</title>
        <authorList>
            <person name="Engel S.R."/>
            <person name="Dietrich F.S."/>
            <person name="Fisk D.G."/>
            <person name="Binkley G."/>
            <person name="Balakrishnan R."/>
            <person name="Costanzo M.C."/>
            <person name="Dwight S.S."/>
            <person name="Hitz B.C."/>
            <person name="Karra K."/>
            <person name="Nash R.S."/>
            <person name="Weng S."/>
            <person name="Wong E.D."/>
            <person name="Lloyd P."/>
            <person name="Skrzypek M.S."/>
            <person name="Miyasato S.R."/>
            <person name="Simison M."/>
            <person name="Cherry J.M."/>
        </authorList>
    </citation>
    <scope>GENOME REANNOTATION</scope>
    <source>
        <strain>ATCC 204508 / S288c</strain>
    </source>
</reference>
<reference key="4">
    <citation type="journal article" date="2000" name="FEBS Lett.">
        <title>Transcriptional regulation of the Saccharomyces cerevisiae DAL5 gene family and identification of the high affinity nicotinic acid permease TNA1 (YGR260w).</title>
        <authorList>
            <person name="Llorente B."/>
            <person name="Dujon B."/>
        </authorList>
    </citation>
    <scope>CHARACTERIZATION</scope>
</reference>
<reference key="5">
    <citation type="journal article" date="2003" name="Nat. Biotechnol.">
        <title>A proteomics approach to understanding protein ubiquitination.</title>
        <authorList>
            <person name="Peng J."/>
            <person name="Schwartz D."/>
            <person name="Elias J.E."/>
            <person name="Thoreen C.C."/>
            <person name="Cheng D."/>
            <person name="Marsischky G."/>
            <person name="Roelofs J."/>
            <person name="Finley D."/>
            <person name="Gygi S.P."/>
        </authorList>
    </citation>
    <scope>UBIQUITINATION [LARGE SCALE ANALYSIS] AT LYS-283</scope>
    <scope>IDENTIFICATION BY MASS SPECTROMETRY</scope>
    <source>
        <strain>SUB592</strain>
    </source>
</reference>
<reference key="6">
    <citation type="journal article" date="2006" name="Proc. Natl. Acad. Sci. U.S.A.">
        <title>A global topology map of the Saccharomyces cerevisiae membrane proteome.</title>
        <authorList>
            <person name="Kim H."/>
            <person name="Melen K."/>
            <person name="Oesterberg M."/>
            <person name="von Heijne G."/>
        </authorList>
    </citation>
    <scope>TOPOLOGY [LARGE SCALE ANALYSIS]</scope>
    <source>
        <strain>ATCC 208353 / W303-1A</strain>
    </source>
</reference>
<reference key="7">
    <citation type="journal article" date="2009" name="Science">
        <title>Global analysis of Cdk1 substrate phosphorylation sites provides insights into evolution.</title>
        <authorList>
            <person name="Holt L.J."/>
            <person name="Tuch B.B."/>
            <person name="Villen J."/>
            <person name="Johnson A.D."/>
            <person name="Gygi S.P."/>
            <person name="Morgan D.O."/>
        </authorList>
    </citation>
    <scope>PHOSPHORYLATION [LARGE SCALE ANALYSIS] AT SER-27</scope>
    <scope>IDENTIFICATION BY MASS SPECTROMETRY [LARGE SCALE ANALYSIS]</scope>
</reference>
<organism>
    <name type="scientific">Saccharomyces cerevisiae (strain ATCC 204508 / S288c)</name>
    <name type="common">Baker's yeast</name>
    <dbReference type="NCBI Taxonomy" id="559292"/>
    <lineage>
        <taxon>Eukaryota</taxon>
        <taxon>Fungi</taxon>
        <taxon>Dikarya</taxon>
        <taxon>Ascomycota</taxon>
        <taxon>Saccharomycotina</taxon>
        <taxon>Saccharomycetes</taxon>
        <taxon>Saccharomycetales</taxon>
        <taxon>Saccharomycetaceae</taxon>
        <taxon>Saccharomyces</taxon>
    </lineage>
</organism>
<comment type="function">
    <text>Involved in the uptake of nicotinic acid.</text>
</comment>
<comment type="subcellular location">
    <subcellularLocation>
        <location>Membrane</location>
        <topology>Multi-pass membrane protein</topology>
    </subcellularLocation>
</comment>
<comment type="similarity">
    <text evidence="4">Belongs to the major facilitator superfamily. Allantoate permease family.</text>
</comment>
<keyword id="KW-1017">Isopeptide bond</keyword>
<keyword id="KW-0472">Membrane</keyword>
<keyword id="KW-0597">Phosphoprotein</keyword>
<keyword id="KW-1185">Reference proteome</keyword>
<keyword id="KW-0812">Transmembrane</keyword>
<keyword id="KW-1133">Transmembrane helix</keyword>
<keyword id="KW-0813">Transport</keyword>
<keyword id="KW-0832">Ubl conjugation</keyword>